<evidence type="ECO:0000250" key="1"/>
<evidence type="ECO:0000269" key="2">
    <source>
    </source>
</evidence>
<evidence type="ECO:0000269" key="3">
    <source>
    </source>
</evidence>
<evidence type="ECO:0000269" key="4">
    <source>
    </source>
</evidence>
<evidence type="ECO:0000269" key="5">
    <source>
    </source>
</evidence>
<evidence type="ECO:0000269" key="6">
    <source>
    </source>
</evidence>
<evidence type="ECO:0000305" key="7"/>
<evidence type="ECO:0000305" key="8">
    <source>
    </source>
</evidence>
<evidence type="ECO:0000305" key="9">
    <source>
    </source>
</evidence>
<evidence type="ECO:0000305" key="10">
    <source>
    </source>
</evidence>
<evidence type="ECO:0000305" key="11">
    <source>
    </source>
</evidence>
<evidence type="ECO:0007744" key="12">
    <source>
        <dbReference type="PDB" id="3G7D"/>
    </source>
</evidence>
<evidence type="ECO:0007744" key="13">
    <source>
        <dbReference type="PDB" id="3GBF"/>
    </source>
</evidence>
<evidence type="ECO:0007744" key="14">
    <source>
        <dbReference type="PDB" id="3RZZ"/>
    </source>
</evidence>
<evidence type="ECO:0007829" key="15">
    <source>
        <dbReference type="PDB" id="3RZZ"/>
    </source>
</evidence>
<evidence type="ECO:0007829" key="16">
    <source>
        <dbReference type="PDB" id="4YAR"/>
    </source>
</evidence>
<keyword id="KW-0002">3D-structure</keyword>
<keyword id="KW-0045">Antibiotic biosynthesis</keyword>
<keyword id="KW-0223">Dioxygenase</keyword>
<keyword id="KW-0238">DNA-binding</keyword>
<keyword id="KW-0408">Iron</keyword>
<keyword id="KW-0479">Metal-binding</keyword>
<keyword id="KW-0560">Oxidoreductase</keyword>
<keyword id="KW-1185">Reference proteome</keyword>
<keyword id="KW-0677">Repeat</keyword>
<proteinExistence type="evidence at protein level"/>
<feature type="chain" id="PRO_0000422032" description="2-hydroxyethylphosphonate dioxygenase">
    <location>
        <begin position="1"/>
        <end position="443"/>
    </location>
</feature>
<feature type="domain" description="HTH cro/C1-type 1">
    <location>
        <begin position="8"/>
        <end position="63"/>
    </location>
</feature>
<feature type="domain" description="HTH cro/C1-type 2">
    <location>
        <begin position="234"/>
        <end position="290"/>
    </location>
</feature>
<feature type="DNA-binding region" description="H-T-H motif" evidence="1">
    <location>
        <begin position="19"/>
        <end position="38"/>
    </location>
</feature>
<feature type="DNA-binding region" description="H-T-H motif" evidence="1">
    <location>
        <begin position="245"/>
        <end position="265"/>
    </location>
</feature>
<feature type="binding site" evidence="13">
    <location>
        <position position="16"/>
    </location>
    <ligand>
        <name>substrate</name>
        <note>ligand shared between dimeric partners</note>
    </ligand>
</feature>
<feature type="binding site" description="in other chain" evidence="13">
    <location>
        <position position="98"/>
    </location>
    <ligand>
        <name>substrate</name>
        <note>ligand shared between dimeric partners</note>
    </ligand>
</feature>
<feature type="binding site" description="in other chain" evidence="13">
    <location>
        <position position="126"/>
    </location>
    <ligand>
        <name>substrate</name>
        <note>ligand shared between dimeric partners</note>
    </ligand>
</feature>
<feature type="binding site" evidence="3 6 12 13 14">
    <location>
        <position position="129"/>
    </location>
    <ligand>
        <name>Fe cation</name>
        <dbReference type="ChEBI" id="CHEBI:24875"/>
    </ligand>
</feature>
<feature type="binding site" description="in other chain" evidence="13">
    <location>
        <position position="176"/>
    </location>
    <ligand>
        <name>substrate</name>
        <note>ligand shared between dimeric partners</note>
    </ligand>
</feature>
<feature type="binding site" evidence="3 6 12 13 14">
    <location>
        <position position="182"/>
    </location>
    <ligand>
        <name>Fe cation</name>
        <dbReference type="ChEBI" id="CHEBI:24875"/>
    </ligand>
</feature>
<feature type="binding site" description="in other chain" evidence="13">
    <location>
        <position position="182"/>
    </location>
    <ligand>
        <name>substrate</name>
        <note>ligand shared between dimeric partners</note>
    </ligand>
</feature>
<feature type="binding site" description="in other chain" evidence="13">
    <location>
        <position position="196"/>
    </location>
    <ligand>
        <name>substrate</name>
        <note>ligand shared between dimeric partners</note>
    </ligand>
</feature>
<feature type="mutagenesis site" description="Abolishes 2-hydroxyethylphosphonate dioxygenase activity." evidence="6">
    <original>K</original>
    <variation>A</variation>
    <location>
        <position position="16"/>
    </location>
</feature>
<feature type="mutagenesis site" description="Results in a much higher apparent KM for 2-hydroxyethylphosphonate. Caanot be saturated in (O2)." evidence="6">
    <original>R</original>
    <variation>A</variation>
    <location>
        <position position="90"/>
    </location>
</feature>
<feature type="mutagenesis site" description="Still able to convert 2-hydroxyethylphosphonate to hydroxymethylphosphonate and formate; however, in contrast to wild-type enzyme which consumes O(2) without a loss of catalytic activity, the rate of consumption of O(2) gradually decreases until the enzyme has lost all activity well before substrate has been consumed." evidence="6">
    <original>Y</original>
    <variation>F</variation>
    <location>
        <position position="98"/>
    </location>
</feature>
<feature type="helix" evidence="16">
    <location>
        <begin position="5"/>
        <end position="15"/>
    </location>
</feature>
<feature type="helix" evidence="16">
    <location>
        <begin position="19"/>
        <end position="26"/>
    </location>
</feature>
<feature type="helix" evidence="16">
    <location>
        <begin position="30"/>
        <end position="36"/>
    </location>
</feature>
<feature type="strand" evidence="16">
    <location>
        <begin position="37"/>
        <end position="39"/>
    </location>
</feature>
<feature type="turn" evidence="16">
    <location>
        <begin position="43"/>
        <end position="46"/>
    </location>
</feature>
<feature type="helix" evidence="16">
    <location>
        <begin position="49"/>
        <end position="55"/>
    </location>
</feature>
<feature type="helix" evidence="16">
    <location>
        <begin position="60"/>
        <end position="62"/>
    </location>
</feature>
<feature type="strand" evidence="16">
    <location>
        <begin position="73"/>
        <end position="76"/>
    </location>
</feature>
<feature type="helix" evidence="16">
    <location>
        <begin position="78"/>
        <end position="82"/>
    </location>
</feature>
<feature type="strand" evidence="16">
    <location>
        <begin position="86"/>
        <end position="90"/>
    </location>
</feature>
<feature type="strand" evidence="16">
    <location>
        <begin position="93"/>
        <end position="100"/>
    </location>
</feature>
<feature type="strand" evidence="16">
    <location>
        <begin position="111"/>
        <end position="115"/>
    </location>
</feature>
<feature type="strand" evidence="16">
    <location>
        <begin position="133"/>
        <end position="141"/>
    </location>
</feature>
<feature type="strand" evidence="16">
    <location>
        <begin position="143"/>
        <end position="146"/>
    </location>
</feature>
<feature type="strand" evidence="16">
    <location>
        <begin position="148"/>
        <end position="150"/>
    </location>
</feature>
<feature type="turn" evidence="16">
    <location>
        <begin position="153"/>
        <end position="155"/>
    </location>
</feature>
<feature type="strand" evidence="16">
    <location>
        <begin position="156"/>
        <end position="159"/>
    </location>
</feature>
<feature type="strand" evidence="16">
    <location>
        <begin position="173"/>
        <end position="176"/>
    </location>
</feature>
<feature type="strand" evidence="16">
    <location>
        <begin position="183"/>
        <end position="190"/>
    </location>
</feature>
<feature type="strand" evidence="16">
    <location>
        <begin position="192"/>
        <end position="198"/>
    </location>
</feature>
<feature type="helix" evidence="16">
    <location>
        <begin position="204"/>
        <end position="210"/>
    </location>
</feature>
<feature type="helix" evidence="16">
    <location>
        <begin position="215"/>
        <end position="224"/>
    </location>
</feature>
<feature type="helix" evidence="16">
    <location>
        <begin position="231"/>
        <end position="241"/>
    </location>
</feature>
<feature type="helix" evidence="16">
    <location>
        <begin position="246"/>
        <end position="253"/>
    </location>
</feature>
<feature type="helix" evidence="16">
    <location>
        <begin position="257"/>
        <end position="265"/>
    </location>
</feature>
<feature type="helix" evidence="16">
    <location>
        <begin position="270"/>
        <end position="283"/>
    </location>
</feature>
<feature type="helix" evidence="16">
    <location>
        <begin position="287"/>
        <end position="290"/>
    </location>
</feature>
<feature type="strand" evidence="15">
    <location>
        <begin position="298"/>
        <end position="300"/>
    </location>
</feature>
<feature type="turn" evidence="16">
    <location>
        <begin position="301"/>
        <end position="303"/>
    </location>
</feature>
<feature type="helix" evidence="16">
    <location>
        <begin position="307"/>
        <end position="312"/>
    </location>
</feature>
<feature type="strand" evidence="16">
    <location>
        <begin position="315"/>
        <end position="317"/>
    </location>
</feature>
<feature type="strand" evidence="16">
    <location>
        <begin position="320"/>
        <end position="324"/>
    </location>
</feature>
<feature type="strand" evidence="16">
    <location>
        <begin position="335"/>
        <end position="345"/>
    </location>
</feature>
<feature type="strand" evidence="16">
    <location>
        <begin position="353"/>
        <end position="363"/>
    </location>
</feature>
<feature type="strand" evidence="16">
    <location>
        <begin position="365"/>
        <end position="371"/>
    </location>
</feature>
<feature type="strand" evidence="16">
    <location>
        <begin position="374"/>
        <end position="380"/>
    </location>
</feature>
<feature type="strand" evidence="16">
    <location>
        <begin position="385"/>
        <end position="388"/>
    </location>
</feature>
<feature type="strand" evidence="16">
    <location>
        <begin position="394"/>
        <end position="407"/>
    </location>
</feature>
<feature type="helix" evidence="16">
    <location>
        <begin position="413"/>
        <end position="420"/>
    </location>
</feature>
<feature type="strand" evidence="16">
    <location>
        <begin position="422"/>
        <end position="424"/>
    </location>
</feature>
<feature type="helix" evidence="16">
    <location>
        <begin position="425"/>
        <end position="430"/>
    </location>
</feature>
<dbReference type="EC" id="1.13.11.72" evidence="3 4 5 6"/>
<dbReference type="EMBL" id="X65195">
    <property type="protein sequence ID" value="CAJ14042.1"/>
    <property type="status" value="ALT_INIT"/>
    <property type="molecule type" value="Genomic_DNA"/>
</dbReference>
<dbReference type="EMBL" id="AY632421">
    <property type="protein sequence ID" value="AAU00079.2"/>
    <property type="molecule type" value="Genomic_DNA"/>
</dbReference>
<dbReference type="EMBL" id="GG657757">
    <property type="protein sequence ID" value="EFL30523.1"/>
    <property type="molecule type" value="Genomic_DNA"/>
</dbReference>
<dbReference type="RefSeq" id="WP_003988638.1">
    <property type="nucleotide sequence ID" value="NZ_GG657757.1"/>
</dbReference>
<dbReference type="PDB" id="3G7D">
    <property type="method" value="X-ray"/>
    <property type="resolution" value="1.80 A"/>
    <property type="chains" value="A=1-443"/>
</dbReference>
<dbReference type="PDB" id="3GBF">
    <property type="method" value="X-ray"/>
    <property type="resolution" value="1.92 A"/>
    <property type="chains" value="A=1-443"/>
</dbReference>
<dbReference type="PDB" id="3RZZ">
    <property type="method" value="X-ray"/>
    <property type="resolution" value="2.20 A"/>
    <property type="chains" value="A=1-443"/>
</dbReference>
<dbReference type="PDB" id="4YAR">
    <property type="method" value="X-ray"/>
    <property type="resolution" value="1.75 A"/>
    <property type="chains" value="A=1-443"/>
</dbReference>
<dbReference type="PDBsum" id="3G7D"/>
<dbReference type="PDBsum" id="3GBF"/>
<dbReference type="PDBsum" id="3RZZ"/>
<dbReference type="PDBsum" id="4YAR"/>
<dbReference type="SMR" id="Q5IW40"/>
<dbReference type="DIP" id="DIP-59765N"/>
<dbReference type="STRING" id="591159.SSQG_01041"/>
<dbReference type="KEGG" id="ag:AAU00079"/>
<dbReference type="eggNOG" id="ENOG5031FT4">
    <property type="taxonomic scope" value="Bacteria"/>
</dbReference>
<dbReference type="HOGENOM" id="CLU_622432_0_0_11"/>
<dbReference type="OrthoDB" id="4528567at2"/>
<dbReference type="BioCyc" id="MetaCyc:MONOMER-15041"/>
<dbReference type="BRENDA" id="1.13.11.72">
    <property type="organism ID" value="6116"/>
</dbReference>
<dbReference type="UniPathway" id="UPA00197"/>
<dbReference type="EvolutionaryTrace" id="Q5IW40"/>
<dbReference type="Proteomes" id="UP000004184">
    <property type="component" value="Unassembled WGS sequence"/>
</dbReference>
<dbReference type="GO" id="GO:0003677">
    <property type="term" value="F:DNA binding"/>
    <property type="evidence" value="ECO:0007669"/>
    <property type="project" value="UniProtKB-KW"/>
</dbReference>
<dbReference type="GO" id="GO:0008198">
    <property type="term" value="F:ferrous iron binding"/>
    <property type="evidence" value="ECO:0000314"/>
    <property type="project" value="UniProtKB"/>
</dbReference>
<dbReference type="GO" id="GO:0042802">
    <property type="term" value="F:identical protein binding"/>
    <property type="evidence" value="ECO:0000353"/>
    <property type="project" value="IntAct"/>
</dbReference>
<dbReference type="GO" id="GO:0016702">
    <property type="term" value="F:oxidoreductase activity, acting on single donors with incorporation of molecular oxygen, incorporation of two atoms of oxygen"/>
    <property type="evidence" value="ECO:0000314"/>
    <property type="project" value="UniProtKB"/>
</dbReference>
<dbReference type="GO" id="GO:0042803">
    <property type="term" value="F:protein homodimerization activity"/>
    <property type="evidence" value="ECO:0000314"/>
    <property type="project" value="UniProtKB"/>
</dbReference>
<dbReference type="GO" id="GO:0017000">
    <property type="term" value="P:antibiotic biosynthetic process"/>
    <property type="evidence" value="ECO:0007669"/>
    <property type="project" value="UniProtKB-KW"/>
</dbReference>
<dbReference type="GO" id="GO:0032923">
    <property type="term" value="P:organic phosphonate biosynthetic process"/>
    <property type="evidence" value="ECO:0000314"/>
    <property type="project" value="UniProtKB"/>
</dbReference>
<dbReference type="GO" id="GO:1901766">
    <property type="term" value="P:phosphinothricin biosynthetic process"/>
    <property type="evidence" value="ECO:0000314"/>
    <property type="project" value="UniProtKB"/>
</dbReference>
<dbReference type="FunFam" id="2.60.120.10:FF:000409">
    <property type="entry name" value="2-hydroxyethylphosphonate dioxygenase"/>
    <property type="match status" value="1"/>
</dbReference>
<dbReference type="Gene3D" id="2.60.120.10">
    <property type="entry name" value="Jelly Rolls"/>
    <property type="match status" value="2"/>
</dbReference>
<dbReference type="Gene3D" id="1.10.260.40">
    <property type="entry name" value="lambda repressor-like DNA-binding domains"/>
    <property type="match status" value="1"/>
</dbReference>
<dbReference type="InterPro" id="IPR001387">
    <property type="entry name" value="Cro/C1-type_HTH"/>
</dbReference>
<dbReference type="InterPro" id="IPR010982">
    <property type="entry name" value="Lambda_DNA-bd_dom_sf"/>
</dbReference>
<dbReference type="InterPro" id="IPR014710">
    <property type="entry name" value="RmlC-like_jellyroll"/>
</dbReference>
<dbReference type="InterPro" id="IPR011051">
    <property type="entry name" value="RmlC_Cupin_sf"/>
</dbReference>
<dbReference type="SMART" id="SM00530">
    <property type="entry name" value="HTH_XRE"/>
    <property type="match status" value="2"/>
</dbReference>
<dbReference type="SUPFAM" id="SSF51182">
    <property type="entry name" value="RmlC-like cupins"/>
    <property type="match status" value="1"/>
</dbReference>
<accession>Q5IW40</accession>
<accession>D9XF44</accession>
<accession>Q4JFE9</accession>
<name>HEPD_STRVT</name>
<comment type="function">
    <text evidence="2 3 4 5 6">Non-heme-dependent dioxygenase that catalyzes the conversion of 2-hydroxyethylphosphonate (HEP) to hydroxymethylphosphonate (HMP) in the biosynthesis of phosphinothricin tripeptide (PTT), also known as bialaphos (BA), a natural-product antibiotic and potent herbicide. PTT contains the unusual amino acid phosphinothricin attached to 2 alanine residues. Synthetic phosphinothricin (glufosinate) is a key component of commercial herbicides.</text>
</comment>
<comment type="catalytic activity">
    <reaction evidence="3 4 5 6">
        <text>2-hydroxyethylphosphonate + O2 = hydroxymethylphosphonate + formate + H(+)</text>
        <dbReference type="Rhea" id="RHEA:34791"/>
        <dbReference type="ChEBI" id="CHEBI:15378"/>
        <dbReference type="ChEBI" id="CHEBI:15379"/>
        <dbReference type="ChEBI" id="CHEBI:15740"/>
        <dbReference type="ChEBI" id="CHEBI:60991"/>
        <dbReference type="ChEBI" id="CHEBI:71199"/>
        <dbReference type="EC" id="1.13.11.72"/>
    </reaction>
</comment>
<comment type="cofactor">
    <cofactor evidence="3">
        <name>Fe(2+)</name>
        <dbReference type="ChEBI" id="CHEBI:29033"/>
    </cofactor>
    <text evidence="3">Binds 1 Fe(2+) ion per subunit.</text>
</comment>
<comment type="biophysicochemical properties">
    <kinetics>
        <KM evidence="6">9.8 uM for 2-hydroxyethylphosphonate</KM>
        <KM evidence="6">33 uM for O(2)</KM>
        <text>kcat is 0.35 sec(-1).</text>
    </kinetics>
</comment>
<comment type="pathway">
    <text evidence="3 8">Secondary metabolite biosynthesis; bialaphos biosynthesis.</text>
</comment>
<comment type="subunit">
    <text evidence="3 6">Homodimer.</text>
</comment>
<comment type="interaction">
    <interactant intactId="EBI-15787755">
        <id>Q5IW40</id>
    </interactant>
    <interactant intactId="EBI-15787755">
        <id>Q5IW40</id>
        <label>hepD</label>
    </interactant>
    <organismsDiffer>false</organismsDiffer>
    <experiments>2</experiments>
</comment>
<comment type="miscellaneous">
    <text evidence="10 11">Mediates the cleavage of the carbon-carbon bond of 2-hydroxyethylphosphonate (HEP) to produce hydroxymethylphosphonate (HMP) and formate without input of electrons or use of any organic cofactors. Reaction was initially supposed to follow a Criegee rearrangement with a phosphorus-based migrating group (PubMed:19839620). However, it was laster shown that it is not the case (PubMed:21381767).</text>
</comment>
<comment type="miscellaneous">
    <text evidence="8 9">Phosphinothricin tripeptide (PTT) herbicide and fosfomycin antibiotic biosynthesis pathways share early steps starting with phosphoenolpyruvate before the pathways diverge after formation of 2-hydroxyethylphosphonate (HEP) (PubMed:17632514). HepD is involved in phosphinothricin tripeptide (PTT) herbicide biosynthesis after divergence of the 2 pathways (PubMed:19516340).</text>
</comment>
<comment type="similarity">
    <text evidence="7">Belongs to the non-heme iron-dependent dioxygenase family.</text>
</comment>
<comment type="sequence caution" evidence="7">
    <conflict type="erroneous initiation">
        <sequence resource="EMBL-CDS" id="CAJ14042"/>
    </conflict>
    <text>Truncated N-terminus.</text>
</comment>
<organism>
    <name type="scientific">Streptomyces viridochromogenes (strain DSM 40736 / JCM 4977 / BCRC 1201 / Tue 494)</name>
    <dbReference type="NCBI Taxonomy" id="591159"/>
    <lineage>
        <taxon>Bacteria</taxon>
        <taxon>Bacillati</taxon>
        <taxon>Actinomycetota</taxon>
        <taxon>Actinomycetes</taxon>
        <taxon>Kitasatosporales</taxon>
        <taxon>Streptomycetaceae</taxon>
        <taxon>Streptomyces</taxon>
    </lineage>
</organism>
<gene>
    <name type="primary">hepD</name>
    <name type="synonym">phpD</name>
    <name type="ORF">SSQG_01041</name>
</gene>
<sequence length="443" mass="48091">MRIDPFKLAHWMNARKYTAAQTADLAGLPLDDLRRLLGDEANEPDPAAATALAEALSVEPSQLAADAHRNLTVVHKSAEEMHASRRPIQRDGIHFYNYYTLAAPEGRVAPVVLDILCPSDRLPALNNGHLEPAITVNLGPGDINGRWGEEITPQTWRVLHANHGGDRWITGDSYVEPSYCPHSYSLAGDAPARIVSYTAQSNISPLMTEANNWSTGAFEEALKALSGKVSAGSVLDLFLARRAHTRTSAAEAAGVPPADLEAALRSPASETGLTVLRTLGRALGFDYRVLLPADDQHDGVGKTWTTIEDSRRSRRTFGTYEAASMASAAHLPDLVGSFLRVDADGRGADLIDHAENHYVVTEGRLTLEWDGPDGPASVELEPDGSAWTGPFVRHRWHGTGTVLKFGSGAHLGYQDWLELTNTFEPAATLRRGRRDLAGWGYDN</sequence>
<protein>
    <recommendedName>
        <fullName>2-hydroxyethylphosphonate dioxygenase</fullName>
        <ecNumber evidence="3 4 5 6">1.13.11.72</ecNumber>
    </recommendedName>
    <alternativeName>
        <fullName>Hydroxyethylphosphonate dioxygenase</fullName>
    </alternativeName>
    <alternativeName>
        <fullName>Phosphinothricin tripeptide biosynthesis protein D</fullName>
    </alternativeName>
</protein>
<reference key="1">
    <citation type="journal article" date="1996" name="Appl. Environ. Microbiol.">
        <title>The peptide synthetase gene phsA from Streptomyces viridochromogenes is not juxtaposed with other genes involved in nonribosomal biosynthesis of peptides.</title>
        <authorList>
            <person name="Schwartz D."/>
            <person name="Alijah R."/>
            <person name="Nussbaumer B."/>
            <person name="Pelzer S."/>
            <person name="Wohlleben W."/>
        </authorList>
    </citation>
    <scope>NUCLEOTIDE SEQUENCE [GENOMIC DNA]</scope>
    <source>
        <strain>DSM 40736 / JCM 4977 / BCRC 1201 / Tue 494</strain>
    </source>
</reference>
<reference key="2">
    <citation type="journal article" date="2005" name="Antimicrob. Agents Chemother.">
        <title>Molecular cloning, sequence analysis, and heterologous expression of the phosphinothricin tripeptide biosynthetic gene cluster from Streptomyces viridochromogenes DSM 40736.</title>
        <authorList>
            <person name="Blodgett J.A."/>
            <person name="Zhang J.K."/>
            <person name="Metcalf W.W."/>
        </authorList>
    </citation>
    <scope>NUCLEOTIDE SEQUENCE [GENOMIC DNA]</scope>
    <source>
        <strain>DSM 40736 / JCM 4977 / BCRC 1201 / Tue 494</strain>
    </source>
</reference>
<reference key="3">
    <citation type="submission" date="2009-02" db="EMBL/GenBank/DDBJ databases">
        <title>Annotation of Streptomyces viridochromogenes strain DSM 40736.</title>
        <authorList>
            <consortium name="The Broad Institute Genome Sequencing Platform"/>
            <consortium name="Broad Institute Microbial Sequencing Center"/>
            <person name="Fischbach M."/>
            <person name="Godfrey P."/>
            <person name="Ward D."/>
            <person name="Young S."/>
            <person name="Zeng Q."/>
            <person name="Koehrsen M."/>
            <person name="Alvarado L."/>
            <person name="Berlin A.M."/>
            <person name="Bochicchio J."/>
            <person name="Borenstein D."/>
            <person name="Chapman S.B."/>
            <person name="Chen Z."/>
            <person name="Engels R."/>
            <person name="Freedman E."/>
            <person name="Gellesch M."/>
            <person name="Goldberg J."/>
            <person name="Griggs A."/>
            <person name="Gujja S."/>
            <person name="Heilman E.R."/>
            <person name="Heiman D.I."/>
            <person name="Hepburn T.A."/>
            <person name="Howarth C."/>
            <person name="Jen D."/>
            <person name="Larson L."/>
            <person name="Lewis B."/>
            <person name="Mehta T."/>
            <person name="Park D."/>
            <person name="Pearson M."/>
            <person name="Richards J."/>
            <person name="Roberts A."/>
            <person name="Saif S."/>
            <person name="Shea T.D."/>
            <person name="Shenoy N."/>
            <person name="Sisk P."/>
            <person name="Stolte C."/>
            <person name="Sykes S.N."/>
            <person name="Thomson T."/>
            <person name="Walk T."/>
            <person name="White J."/>
            <person name="Yandava C."/>
            <person name="Straight P."/>
            <person name="Clardy J."/>
            <person name="Hung D."/>
            <person name="Kolter R."/>
            <person name="Mekalanos J."/>
            <person name="Walker S."/>
            <person name="Walsh C.T."/>
            <person name="Wieland-Brown L.C."/>
            <person name="Haas B."/>
            <person name="Nusbaum C."/>
            <person name="Birren B."/>
        </authorList>
    </citation>
    <scope>NUCLEOTIDE SEQUENCE [LARGE SCALE GENOMIC DNA]</scope>
    <source>
        <strain>DSM 40736 / JCM 4977 / BCRC 1201 / Tue 494</strain>
    </source>
</reference>
<reference key="4">
    <citation type="journal article" date="2007" name="Nat. Chem. Biol.">
        <title>Unusual transformations in the biosynthesis of the antibiotic phosphinothricin tripeptide.</title>
        <authorList>
            <person name="Blodgett J.A."/>
            <person name="Thomas P.M."/>
            <person name="Li G."/>
            <person name="Velasquez J.E."/>
            <person name="van der Donk W.A."/>
            <person name="Kelleher N.L."/>
            <person name="Metcalf W.W."/>
        </authorList>
    </citation>
    <scope>FUNCTION</scope>
    <source>
        <strain>DSM 40736 / JCM 4977 / BCRC 1201 / Tue 494</strain>
    </source>
</reference>
<reference key="5">
    <citation type="journal article" date="2009" name="J. Am. Chem. Soc.">
        <title>Hydroperoxylation by hydroxyethylphosphonate dioxygenase.</title>
        <authorList>
            <person name="Whitteck J.T."/>
            <person name="Cicchillo R.M."/>
            <person name="van der Donk W.A."/>
        </authorList>
    </citation>
    <scope>FUNCTION</scope>
    <scope>CATALYTIC ACTIVITY</scope>
    <scope>REACTION MECHANISM</scope>
</reference>
<reference key="6">
    <citation type="journal article" date="2011" name="J. Am. Chem. Soc.">
        <title>On the stereochemistry of 2-hydroxyethylphosphonate dioxygenase.</title>
        <authorList>
            <person name="Whitteck J.T."/>
            <person name="Malova P."/>
            <person name="Peck S.C."/>
            <person name="Cicchillo R.M."/>
            <person name="Hammerschmidt F."/>
            <person name="van der Donk W.A."/>
        </authorList>
    </citation>
    <scope>FUNCTION</scope>
    <scope>CATALYTIC ACTIVITY</scope>
    <scope>REACTION MECHANISM</scope>
</reference>
<reference evidence="12" key="7">
    <citation type="journal article" date="2009" name="Nature">
        <title>An unusual carbon-carbon bond cleavage reaction during phosphinothricin biosynthesis.</title>
        <authorList>
            <person name="Cicchillo R.M."/>
            <person name="Zhang H."/>
            <person name="Blodgett J.A."/>
            <person name="Whitteck J.T."/>
            <person name="Li G."/>
            <person name="Nair S.K."/>
            <person name="van der Donk W.A."/>
            <person name="Metcalf W.W."/>
        </authorList>
    </citation>
    <scope>X-RAY CRYSTALLOGRAPHY (1.80 ANGSTROMS) IN COMPLEX WITH COBALT</scope>
    <scope>FUNCTION</scope>
    <scope>CATALYTIC ACTIVITY</scope>
    <scope>COFACTOR</scope>
    <scope>PATHWAY</scope>
</reference>
<reference evidence="14" key="8">
    <citation type="journal article" date="2011" name="Biochemistry">
        <title>Mechanism and substrate recognition of 2-hydroxyethylphosphonate dioxygenase.</title>
        <authorList>
            <person name="Peck S.C."/>
            <person name="Cooke H.A."/>
            <person name="Cicchillo R.M."/>
            <person name="Malova P."/>
            <person name="Hammerschmidt F."/>
            <person name="Nair S.K."/>
            <person name="van der Donk W.A."/>
        </authorList>
    </citation>
    <scope>X-RAY CRYSTALLOGRAPHY (2.20 ANGSTROMS) IN COMPLEX WITH COBALT AND 2-HYDROXYETHYLPHOSPHONATE</scope>
    <scope>SUBUNIT</scope>
    <scope>FUNCTION</scope>
    <scope>CATALYTIC ACTIVITY</scope>
    <scope>BIOPHYSICOCHEMICAL PROPERTIES</scope>
    <scope>MUTAGENESIS OF LYS-16; ARG-90 AND TYR-98</scope>
</reference>